<dbReference type="SMR" id="H2LBU8"/>
<dbReference type="FunCoup" id="H2LBU8">
    <property type="interactions" value="781"/>
</dbReference>
<dbReference type="STRING" id="8090.ENSORLP00000003377"/>
<dbReference type="iPTMnet" id="H2LBU8"/>
<dbReference type="eggNOG" id="KOG0940">
    <property type="taxonomic scope" value="Eukaryota"/>
</dbReference>
<dbReference type="HOGENOM" id="CLU_041917_0_1_1"/>
<dbReference type="InParanoid" id="H2LBU8"/>
<dbReference type="TreeFam" id="TF326941"/>
<dbReference type="Proteomes" id="UP000001038">
    <property type="component" value="Unplaced"/>
</dbReference>
<dbReference type="Proteomes" id="UP000265180">
    <property type="component" value="Chromosome 9"/>
</dbReference>
<dbReference type="Proteomes" id="UP000265200">
    <property type="component" value="Chromosome 9"/>
</dbReference>
<dbReference type="GO" id="GO:0005923">
    <property type="term" value="C:bicellular tight junction"/>
    <property type="evidence" value="ECO:0007669"/>
    <property type="project" value="UniProtKB-SubCell"/>
</dbReference>
<dbReference type="GO" id="GO:0005911">
    <property type="term" value="C:cell-cell junction"/>
    <property type="evidence" value="ECO:0000250"/>
    <property type="project" value="UniProtKB"/>
</dbReference>
<dbReference type="GO" id="GO:0005737">
    <property type="term" value="C:cytoplasm"/>
    <property type="evidence" value="ECO:0000250"/>
    <property type="project" value="UniProtKB"/>
</dbReference>
<dbReference type="GO" id="GO:0005634">
    <property type="term" value="C:nucleus"/>
    <property type="evidence" value="ECO:0000250"/>
    <property type="project" value="UniProtKB"/>
</dbReference>
<dbReference type="GO" id="GO:0005886">
    <property type="term" value="C:plasma membrane"/>
    <property type="evidence" value="ECO:0007669"/>
    <property type="project" value="UniProtKB-SubCell"/>
</dbReference>
<dbReference type="GO" id="GO:0003713">
    <property type="term" value="F:transcription coactivator activity"/>
    <property type="evidence" value="ECO:0000318"/>
    <property type="project" value="GO_Central"/>
</dbReference>
<dbReference type="GO" id="GO:0003714">
    <property type="term" value="F:transcription corepressor activity"/>
    <property type="evidence" value="ECO:0000318"/>
    <property type="project" value="GO_Central"/>
</dbReference>
<dbReference type="GO" id="GO:0035329">
    <property type="term" value="P:hippo signaling"/>
    <property type="evidence" value="ECO:0000318"/>
    <property type="project" value="GO_Central"/>
</dbReference>
<dbReference type="GO" id="GO:0045944">
    <property type="term" value="P:positive regulation of transcription by RNA polymerase II"/>
    <property type="evidence" value="ECO:0000318"/>
    <property type="project" value="GO_Central"/>
</dbReference>
<dbReference type="CDD" id="cd00201">
    <property type="entry name" value="WW"/>
    <property type="match status" value="2"/>
</dbReference>
<dbReference type="FunFam" id="2.20.70.10:FF:000019">
    <property type="entry name" value="Putative transcriptional coactivator YAP1"/>
    <property type="match status" value="1"/>
</dbReference>
<dbReference type="FunFam" id="2.20.70.10:FF:000012">
    <property type="entry name" value="transcriptional coactivator YAP1 isoform X2"/>
    <property type="match status" value="1"/>
</dbReference>
<dbReference type="Gene3D" id="2.20.70.10">
    <property type="match status" value="2"/>
</dbReference>
<dbReference type="Gene3D" id="6.20.430.10">
    <property type="match status" value="1"/>
</dbReference>
<dbReference type="InterPro" id="IPR053819">
    <property type="entry name" value="TEADIR3_omega_loop"/>
</dbReference>
<dbReference type="InterPro" id="IPR001202">
    <property type="entry name" value="WW_dom"/>
</dbReference>
<dbReference type="InterPro" id="IPR036020">
    <property type="entry name" value="WW_dom_sf"/>
</dbReference>
<dbReference type="InterPro" id="IPR051583">
    <property type="entry name" value="YAP1"/>
</dbReference>
<dbReference type="PANTHER" id="PTHR17616:SF9">
    <property type="entry name" value="TRANSCRIPTIONAL COACTIVATOR YAP1"/>
    <property type="match status" value="1"/>
</dbReference>
<dbReference type="PANTHER" id="PTHR17616">
    <property type="entry name" value="YES-ASSOCIATED PROTEIN YAP1 FAMILY MEMBER"/>
    <property type="match status" value="1"/>
</dbReference>
<dbReference type="Pfam" id="PF15238">
    <property type="entry name" value="TEADIR3"/>
    <property type="match status" value="1"/>
</dbReference>
<dbReference type="Pfam" id="PF00397">
    <property type="entry name" value="WW"/>
    <property type="match status" value="2"/>
</dbReference>
<dbReference type="SMART" id="SM00456">
    <property type="entry name" value="WW"/>
    <property type="match status" value="2"/>
</dbReference>
<dbReference type="SUPFAM" id="SSF51045">
    <property type="entry name" value="WW domain"/>
    <property type="match status" value="2"/>
</dbReference>
<dbReference type="PROSITE" id="PS01159">
    <property type="entry name" value="WW_DOMAIN_1"/>
    <property type="match status" value="2"/>
</dbReference>
<dbReference type="PROSITE" id="PS50020">
    <property type="entry name" value="WW_DOMAIN_2"/>
    <property type="match status" value="2"/>
</dbReference>
<accession>H2LBU8</accession>
<feature type="chain" id="PRO_0000433906" description="Transcriptional coactivator YAP1">
    <location>
        <begin position="1"/>
        <end position="459"/>
    </location>
</feature>
<feature type="domain" description="WW 1" evidence="3">
    <location>
        <begin position="126"/>
        <end position="159"/>
    </location>
</feature>
<feature type="domain" description="WW 2" evidence="3">
    <location>
        <begin position="186"/>
        <end position="219"/>
    </location>
</feature>
<feature type="region of interest" description="Disordered" evidence="4">
    <location>
        <begin position="51"/>
        <end position="88"/>
    </location>
</feature>
<feature type="region of interest" description="Disordered" evidence="4">
    <location>
        <begin position="103"/>
        <end position="129"/>
    </location>
</feature>
<feature type="region of interest" description="Disordered" evidence="4">
    <location>
        <begin position="231"/>
        <end position="254"/>
    </location>
</feature>
<feature type="region of interest" description="Transactivation domain" evidence="2">
    <location>
        <begin position="247"/>
        <end position="459"/>
    </location>
</feature>
<feature type="region of interest" description="Disordered" evidence="4">
    <location>
        <begin position="307"/>
        <end position="364"/>
    </location>
</feature>
<feature type="compositionally biased region" description="Polar residues" evidence="4">
    <location>
        <begin position="307"/>
        <end position="347"/>
    </location>
</feature>
<feature type="compositionally biased region" description="Polar residues" evidence="4">
    <location>
        <begin position="355"/>
        <end position="364"/>
    </location>
</feature>
<feature type="modified residue" description="Phosphoserine; by LATS1 and LATS2" evidence="8">
    <location>
        <position position="21"/>
    </location>
</feature>
<feature type="modified residue" description="Phosphoserine; by LATS1 and LATS2" evidence="8">
    <location>
        <position position="69"/>
    </location>
</feature>
<feature type="modified residue" description="Phosphoserine; by LATS1 and LATS2" evidence="8">
    <location>
        <position position="87"/>
    </location>
</feature>
<feature type="modified residue" description="Phosphoserine; by LATS1 and LATS2" evidence="8">
    <location>
        <position position="119"/>
    </location>
</feature>
<feature type="mutagenesis site" description="In YAP-4SA; prevents phosphorylation by LATS1 and LATS2, promoting retention in the nucleus; when associated with A-69; A-87 and A-119." evidence="5">
    <original>S</original>
    <variation>A</variation>
    <location>
        <position position="21"/>
    </location>
</feature>
<feature type="mutagenesis site" description="In YAP-4SA; prevents phosphorylation by LATS1 and LATS2, promoting retention in the nucleus; when associated with A-21; A-87 and A-119." evidence="5">
    <original>S</original>
    <variation>A</variation>
    <location>
        <position position="69"/>
    </location>
</feature>
<feature type="mutagenesis site" description="In YAP-4SA; prevents phosphorylation by LATS1 and LATS2, promoting retention in the nucleus; when associated with A-21; A-87 and A-119." evidence="5">
    <original>S</original>
    <variation>A</variation>
    <location>
        <position position="87"/>
    </location>
</feature>
<feature type="mutagenesis site" description="In YAP-4SA; prevents phosphorylation by LATS1 and LATS2, promoting retention in the nucleus; when associated with A-21; A-69 and A-87." evidence="5">
    <original>S</original>
    <variation>A</variation>
    <location>
        <position position="119"/>
    </location>
</feature>
<comment type="function">
    <text evidence="2 5">Transcriptional regulator which can act both as a coactivator and a corepressor and is the critical downstream regulatory target in the Hippo signaling pathway that plays a pivotal role in organ size control and tumor suppression by restricting proliferation and promoting apoptosis (By similarity). Plays a key role in tissue tension and 3D tissue shape by regulating cortical actomyosin network formation (PubMed:25778702).</text>
</comment>
<comment type="subcellular location">
    <subcellularLocation>
        <location evidence="2">Cytoplasm</location>
    </subcellularLocation>
    <subcellularLocation>
        <location evidence="2">Nucleus</location>
    </subcellularLocation>
    <subcellularLocation>
        <location evidence="1">Cell junction</location>
        <location evidence="1">Tight junction</location>
    </subcellularLocation>
    <subcellularLocation>
        <location evidence="2">Cell membrane</location>
    </subcellularLocation>
    <text evidence="2">Both phosphorylation and cell density can regulate its subcellular localization. Phosphorylation sequesters it in the cytoplasm by inhibiting its translocation into the nucleus. At low density, predominantly nuclear and is translocated to the cytoplasm at high density.</text>
</comment>
<comment type="tissue specificity">
    <text evidence="5">Ubiquitously expressed throughout development.</text>
</comment>
<comment type="PTM">
    <text evidence="8">Phosphorylated by lats1 and lats2; leading to cytoplasmic translocation and inactivation.</text>
</comment>
<comment type="disruption phenotype">
    <text evidence="5">Embryos are sensitive to deformation by gravity and display a markedly flattened body. Mutants show delayed blastopore closure and progressive body collapse from mid-neurulation, surviving until just before hatching (6 days post-fertilization, dpf). During body collapse, tissues and organs including neural tube and somites become gradually flattened and improperly aligned.</text>
</comment>
<comment type="similarity">
    <text evidence="7">Belongs to the YAP1 family.</text>
</comment>
<organism>
    <name type="scientific">Oryzias latipes</name>
    <name type="common">Japanese rice fish</name>
    <name type="synonym">Japanese killifish</name>
    <dbReference type="NCBI Taxonomy" id="8090"/>
    <lineage>
        <taxon>Eukaryota</taxon>
        <taxon>Metazoa</taxon>
        <taxon>Chordata</taxon>
        <taxon>Craniata</taxon>
        <taxon>Vertebrata</taxon>
        <taxon>Euteleostomi</taxon>
        <taxon>Actinopterygii</taxon>
        <taxon>Neopterygii</taxon>
        <taxon>Teleostei</taxon>
        <taxon>Neoteleostei</taxon>
        <taxon>Acanthomorphata</taxon>
        <taxon>Ovalentaria</taxon>
        <taxon>Atherinomorphae</taxon>
        <taxon>Beloniformes</taxon>
        <taxon>Adrianichthyidae</taxon>
        <taxon>Oryziinae</taxon>
        <taxon>Oryzias</taxon>
    </lineage>
</organism>
<evidence type="ECO:0000250" key="1">
    <source>
        <dbReference type="UniProtKB" id="A0A8C0NGY6"/>
    </source>
</evidence>
<evidence type="ECO:0000250" key="2">
    <source>
        <dbReference type="UniProtKB" id="P46937"/>
    </source>
</evidence>
<evidence type="ECO:0000255" key="3">
    <source>
        <dbReference type="PROSITE-ProRule" id="PRU00224"/>
    </source>
</evidence>
<evidence type="ECO:0000256" key="4">
    <source>
        <dbReference type="SAM" id="MobiDB-lite"/>
    </source>
</evidence>
<evidence type="ECO:0000269" key="5">
    <source>
    </source>
</evidence>
<evidence type="ECO:0000303" key="6">
    <source>
    </source>
</evidence>
<evidence type="ECO:0000305" key="7"/>
<evidence type="ECO:0000305" key="8">
    <source>
    </source>
</evidence>
<sequence>MDPSQHNPPVGHQIVHVRGDSETDLEALFNAVMNPKGAVVPQSVPMRMRKLPDSFFKPPEPKSHSRQASTDAGSGGVLTPHHVRAHSSPASLQLGAVSGGSLSGMASAGASPQHLRQSSYEIPDDVPLPPGWEMAKTSSGQRYFLNHIDQTTTWQDPRKALLQLNQATPPSTVPVQQQNLLSPASGPLPEGWEQAITPEGEIYYINHKNKTTSWLDPRLETRYALNQQRITQSAPVKQGGPLPPNPHGGVMGGNNQMRLQQMEKERIRLKQQELLRQSQRPQIDLQPSTANQDAEHCDELALRNQLPTSMDQDGSSNPVSSPMAQDARTMTANSNDPFLNSVSSGTYHSRDESTDSGLSMSSYSVPRTPDDFLNSVDEMDTGDPLAPSMATQPSRFPDYLDTIPGTDVDLGTLEGESMAVEGEELMPSLQEALSSDILNDMESVLAATKIDKESFLTWL</sequence>
<name>YAP1_ORYLA</name>
<proteinExistence type="evidence at protein level"/>
<keyword id="KW-0010">Activator</keyword>
<keyword id="KW-0965">Cell junction</keyword>
<keyword id="KW-1003">Cell membrane</keyword>
<keyword id="KW-0963">Cytoplasm</keyword>
<keyword id="KW-0472">Membrane</keyword>
<keyword id="KW-0539">Nucleus</keyword>
<keyword id="KW-0597">Phosphoprotein</keyword>
<keyword id="KW-1185">Reference proteome</keyword>
<keyword id="KW-0677">Repeat</keyword>
<keyword id="KW-0678">Repressor</keyword>
<keyword id="KW-0796">Tight junction</keyword>
<keyword id="KW-0804">Transcription</keyword>
<keyword id="KW-0805">Transcription regulation</keyword>
<protein>
    <recommendedName>
        <fullName evidence="2">Transcriptional coactivator YAP1</fullName>
        <shortName evidence="2">Yes-associated protein 1</shortName>
    </recommendedName>
    <alternativeName>
        <fullName evidence="6">Protein hirame</fullName>
    </alternativeName>
    <alternativeName>
        <fullName evidence="2">Protein yorkie homolog</fullName>
    </alternativeName>
    <alternativeName>
        <fullName evidence="2">Yes-associated protein YAP65 homolog</fullName>
    </alternativeName>
</protein>
<reference key="1">
    <citation type="journal article" date="2007" name="Nature">
        <title>The medaka draft genome and insights into vertebrate genome evolution.</title>
        <authorList>
            <person name="Kasahara M."/>
            <person name="Naruse K."/>
            <person name="Sasaki S."/>
            <person name="Nakatani Y."/>
            <person name="Qu W."/>
            <person name="Ahsan B."/>
            <person name="Yamada T."/>
            <person name="Nagayasu Y."/>
            <person name="Doi K."/>
            <person name="Kasai Y."/>
            <person name="Jindo T."/>
            <person name="Kobayashi D."/>
            <person name="Shimada A."/>
            <person name="Toyoda A."/>
            <person name="Kuroki Y."/>
            <person name="Fujiyama A."/>
            <person name="Sasaki T."/>
            <person name="Shimizu A."/>
            <person name="Asakawa S."/>
            <person name="Shimizu N."/>
            <person name="Hashimoto S."/>
            <person name="Yang J."/>
            <person name="Lee Y."/>
            <person name="Matsushima K."/>
            <person name="Sugano S."/>
            <person name="Sakaizumi M."/>
            <person name="Narita T."/>
            <person name="Ohishi K."/>
            <person name="Haga S."/>
            <person name="Ohta F."/>
            <person name="Nomoto H."/>
            <person name="Nogata K."/>
            <person name="Morishita T."/>
            <person name="Endo T."/>
            <person name="Shin-I T."/>
            <person name="Takeda H."/>
            <person name="Morishita S."/>
            <person name="Kohara Y."/>
        </authorList>
    </citation>
    <scope>NUCLEOTIDE SEQUENCE [LARGE SCALE GENOMIC DNA]</scope>
    <source>
        <strain>Hd-rR</strain>
    </source>
</reference>
<reference key="2">
    <citation type="journal article" date="2015" name="Nature">
        <title>YAP is essential for tissue tension to ensure vertebrate 3D body shape.</title>
        <authorList>
            <person name="Porazinski S."/>
            <person name="Wang H."/>
            <person name="Asaoka Y."/>
            <person name="Behrndt M."/>
            <person name="Miyamoto T."/>
            <person name="Morita H."/>
            <person name="Hata S."/>
            <person name="Sasaki T."/>
            <person name="Krens S.F."/>
            <person name="Osada Y."/>
            <person name="Asaka S."/>
            <person name="Momoi A."/>
            <person name="Linton S."/>
            <person name="Miesfeld J.B."/>
            <person name="Link B.A."/>
            <person name="Senga T."/>
            <person name="Castillo-Morales A."/>
            <person name="Urrutia A.O."/>
            <person name="Shimizu N."/>
            <person name="Nagase H."/>
            <person name="Matsuura S."/>
            <person name="Bagby S."/>
            <person name="Kondoh H."/>
            <person name="Nishina H."/>
            <person name="Heisenberg C.P."/>
            <person name="Furutani-Seiki M."/>
        </authorList>
    </citation>
    <scope>FUNCTION</scope>
    <scope>DISRUPTION PHENOTYPE</scope>
    <scope>TISSUE SPECIFICITY</scope>
    <scope>PHOSPHORYLATION AT SER-21; SER-69; SER-87 AND SER-119</scope>
    <scope>MUTAGENESIS OF SER-21; SER-69; SER-87 AND SER-119</scope>
</reference>
<gene>
    <name evidence="2" type="primary">yap1</name>
    <name evidence="6" type="synonym">hir</name>
</gene>